<gene>
    <name evidence="1" type="primary">rplR</name>
    <name type="ordered locus">C8J_1595</name>
</gene>
<keyword id="KW-0687">Ribonucleoprotein</keyword>
<keyword id="KW-0689">Ribosomal protein</keyword>
<keyword id="KW-0694">RNA-binding</keyword>
<keyword id="KW-0699">rRNA-binding</keyword>
<organism>
    <name type="scientific">Campylobacter jejuni subsp. jejuni serotype O:6 (strain 81116 / NCTC 11828)</name>
    <dbReference type="NCBI Taxonomy" id="407148"/>
    <lineage>
        <taxon>Bacteria</taxon>
        <taxon>Pseudomonadati</taxon>
        <taxon>Campylobacterota</taxon>
        <taxon>Epsilonproteobacteria</taxon>
        <taxon>Campylobacterales</taxon>
        <taxon>Campylobacteraceae</taxon>
        <taxon>Campylobacter</taxon>
    </lineage>
</organism>
<dbReference type="EMBL" id="CP000814">
    <property type="protein sequence ID" value="ABV53192.1"/>
    <property type="molecule type" value="Genomic_DNA"/>
</dbReference>
<dbReference type="RefSeq" id="WP_002785535.1">
    <property type="nucleotide sequence ID" value="NC_009839.1"/>
</dbReference>
<dbReference type="SMR" id="A8FP05"/>
<dbReference type="KEGG" id="cju:C8J_1595"/>
<dbReference type="HOGENOM" id="CLU_098841_0_1_7"/>
<dbReference type="GO" id="GO:0022625">
    <property type="term" value="C:cytosolic large ribosomal subunit"/>
    <property type="evidence" value="ECO:0007669"/>
    <property type="project" value="TreeGrafter"/>
</dbReference>
<dbReference type="GO" id="GO:0008097">
    <property type="term" value="F:5S rRNA binding"/>
    <property type="evidence" value="ECO:0007669"/>
    <property type="project" value="TreeGrafter"/>
</dbReference>
<dbReference type="GO" id="GO:0003735">
    <property type="term" value="F:structural constituent of ribosome"/>
    <property type="evidence" value="ECO:0007669"/>
    <property type="project" value="InterPro"/>
</dbReference>
<dbReference type="GO" id="GO:0006412">
    <property type="term" value="P:translation"/>
    <property type="evidence" value="ECO:0007669"/>
    <property type="project" value="UniProtKB-UniRule"/>
</dbReference>
<dbReference type="CDD" id="cd00432">
    <property type="entry name" value="Ribosomal_L18_L5e"/>
    <property type="match status" value="1"/>
</dbReference>
<dbReference type="Gene3D" id="3.30.420.100">
    <property type="match status" value="1"/>
</dbReference>
<dbReference type="HAMAP" id="MF_01337_B">
    <property type="entry name" value="Ribosomal_uL18_B"/>
    <property type="match status" value="1"/>
</dbReference>
<dbReference type="InterPro" id="IPR004389">
    <property type="entry name" value="Ribosomal_uL18_bac-type"/>
</dbReference>
<dbReference type="InterPro" id="IPR005484">
    <property type="entry name" value="Ribosomal_uL18_bac/euk"/>
</dbReference>
<dbReference type="NCBIfam" id="TIGR00060">
    <property type="entry name" value="L18_bact"/>
    <property type="match status" value="1"/>
</dbReference>
<dbReference type="PANTHER" id="PTHR12899">
    <property type="entry name" value="39S RIBOSOMAL PROTEIN L18, MITOCHONDRIAL"/>
    <property type="match status" value="1"/>
</dbReference>
<dbReference type="PANTHER" id="PTHR12899:SF3">
    <property type="entry name" value="LARGE RIBOSOMAL SUBUNIT PROTEIN UL18M"/>
    <property type="match status" value="1"/>
</dbReference>
<dbReference type="Pfam" id="PF00861">
    <property type="entry name" value="Ribosomal_L18p"/>
    <property type="match status" value="1"/>
</dbReference>
<dbReference type="SUPFAM" id="SSF53137">
    <property type="entry name" value="Translational machinery components"/>
    <property type="match status" value="1"/>
</dbReference>
<protein>
    <recommendedName>
        <fullName evidence="1">Large ribosomal subunit protein uL18</fullName>
    </recommendedName>
    <alternativeName>
        <fullName evidence="2">50S ribosomal protein L18</fullName>
    </alternativeName>
</protein>
<proteinExistence type="inferred from homology"/>
<accession>A8FP05</accession>
<sequence>MRANVLKRKLTLRIKRKKRIRAKISGCENFPRISVFKSNRTLYIQAIDDVKAVTLAAVDGRKLGVKANKEGAKKIAAEFAKTLKAKKIEQAVFDRNGYVYHGVIAALAESLRENGIRL</sequence>
<reference key="1">
    <citation type="journal article" date="2007" name="J. Bacteriol.">
        <title>The complete genome sequence of Campylobacter jejuni strain 81116 (NCTC11828).</title>
        <authorList>
            <person name="Pearson B.M."/>
            <person name="Gaskin D.J.H."/>
            <person name="Segers R.P.A.M."/>
            <person name="Wells J.M."/>
            <person name="Nuijten P.J.M."/>
            <person name="van Vliet A.H.M."/>
        </authorList>
    </citation>
    <scope>NUCLEOTIDE SEQUENCE [LARGE SCALE GENOMIC DNA]</scope>
    <source>
        <strain>81116 / NCTC 11828</strain>
    </source>
</reference>
<comment type="function">
    <text evidence="1">This is one of the proteins that bind and probably mediate the attachment of the 5S RNA into the large ribosomal subunit, where it forms part of the central protuberance.</text>
</comment>
<comment type="subunit">
    <text evidence="1">Part of the 50S ribosomal subunit; part of the 5S rRNA/L5/L18/L25 subcomplex. Contacts the 5S and 23S rRNAs.</text>
</comment>
<comment type="similarity">
    <text evidence="1">Belongs to the universal ribosomal protein uL18 family.</text>
</comment>
<evidence type="ECO:0000255" key="1">
    <source>
        <dbReference type="HAMAP-Rule" id="MF_01337"/>
    </source>
</evidence>
<evidence type="ECO:0000305" key="2"/>
<feature type="chain" id="PRO_1000073304" description="Large ribosomal subunit protein uL18">
    <location>
        <begin position="1"/>
        <end position="118"/>
    </location>
</feature>
<name>RL18_CAMJ8</name>